<feature type="chain" id="PRO_0000247524" description="E3 ubiquitin-protein ligase RNF185">
    <location>
        <begin position="1"/>
        <end position="194"/>
    </location>
</feature>
<feature type="transmembrane region" description="Helical" evidence="2">
    <location>
        <begin position="133"/>
        <end position="153"/>
    </location>
</feature>
<feature type="transmembrane region" description="Helical" evidence="2">
    <location>
        <begin position="174"/>
        <end position="194"/>
    </location>
</feature>
<feature type="zinc finger region" description="RING-type" evidence="3">
    <location>
        <begin position="41"/>
        <end position="82"/>
    </location>
</feature>
<feature type="region of interest" description="Disordered" evidence="4">
    <location>
        <begin position="1"/>
        <end position="32"/>
    </location>
</feature>
<feature type="region of interest" description="Required for ubiquitin ligase activity and protection against ER stress-induced cell death" evidence="1">
    <location>
        <begin position="31"/>
        <end position="82"/>
    </location>
</feature>
<feature type="region of interest" description="Disordered" evidence="4">
    <location>
        <begin position="92"/>
        <end position="125"/>
    </location>
</feature>
<gene>
    <name type="primary">RNF185</name>
    <name type="ORF">RCJMB04_23p11</name>
</gene>
<protein>
    <recommendedName>
        <fullName>E3 ubiquitin-protein ligase RNF185</fullName>
        <ecNumber evidence="1">2.3.2.27</ecNumber>
    </recommendedName>
    <alternativeName>
        <fullName>RING finger protein 185</fullName>
    </alternativeName>
</protein>
<organism>
    <name type="scientific">Gallus gallus</name>
    <name type="common">Chicken</name>
    <dbReference type="NCBI Taxonomy" id="9031"/>
    <lineage>
        <taxon>Eukaryota</taxon>
        <taxon>Metazoa</taxon>
        <taxon>Chordata</taxon>
        <taxon>Craniata</taxon>
        <taxon>Vertebrata</taxon>
        <taxon>Euteleostomi</taxon>
        <taxon>Archelosauria</taxon>
        <taxon>Archosauria</taxon>
        <taxon>Dinosauria</taxon>
        <taxon>Saurischia</taxon>
        <taxon>Theropoda</taxon>
        <taxon>Coelurosauria</taxon>
        <taxon>Aves</taxon>
        <taxon>Neognathae</taxon>
        <taxon>Galloanserae</taxon>
        <taxon>Galliformes</taxon>
        <taxon>Phasianidae</taxon>
        <taxon>Phasianinae</taxon>
        <taxon>Gallus</taxon>
    </lineage>
</organism>
<comment type="function">
    <text evidence="1">E3 ubiquitin-protein ligase that regulates selective mitochondrial autophagy by mediating 'Lys-63'-linked polyubiquitination. Acts in the endoplasmic reticulum (ER)-associated degradation (ERAD) pathway, which targets misfolded proteins that accumulate in the endoplasmic reticulum (ER) for ubiquitination and subsequent proteasome-mediated degradation. Protects cells from ER stress-induced apoptosis. Responsible for the cotranslational ubiquitination and degradation of CFTR in the ERAD pathway. Also acts as a regulator of the innate antiviral response by catalyzing 'Lys-27'-linked polyubiquitination of CGAS, thereby promoting CGAS cyclic GMP-AMP synthase activity. Preferentially associates with the E2 enzymes UBE2J1 and UBE2J2 (By similarity).</text>
</comment>
<comment type="catalytic activity">
    <reaction evidence="1">
        <text>S-ubiquitinyl-[E2 ubiquitin-conjugating enzyme]-L-cysteine + [acceptor protein]-L-lysine = [E2 ubiquitin-conjugating enzyme]-L-cysteine + N(6)-ubiquitinyl-[acceptor protein]-L-lysine.</text>
        <dbReference type="EC" id="2.3.2.27"/>
    </reaction>
</comment>
<comment type="pathway">
    <text evidence="1">Protein modification; protein ubiquitination.</text>
</comment>
<comment type="subcellular location">
    <subcellularLocation>
        <location evidence="1">Mitochondrion outer membrane</location>
        <topology evidence="1">Multi-pass membrane protein</topology>
    </subcellularLocation>
    <subcellularLocation>
        <location evidence="1">Endoplasmic reticulum membrane</location>
        <topology evidence="1">Multi-pass membrane protein</topology>
    </subcellularLocation>
</comment>
<comment type="domain">
    <text evidence="1">The RING-type zinc finger domain is responsible for E3 ubiquitin ligase activity.</text>
</comment>
<keyword id="KW-0072">Autophagy</keyword>
<keyword id="KW-0256">Endoplasmic reticulum</keyword>
<keyword id="KW-0391">Immunity</keyword>
<keyword id="KW-0399">Innate immunity</keyword>
<keyword id="KW-0472">Membrane</keyword>
<keyword id="KW-0479">Metal-binding</keyword>
<keyword id="KW-0496">Mitochondrion</keyword>
<keyword id="KW-1000">Mitochondrion outer membrane</keyword>
<keyword id="KW-1185">Reference proteome</keyword>
<keyword id="KW-0808">Transferase</keyword>
<keyword id="KW-0812">Transmembrane</keyword>
<keyword id="KW-1133">Transmembrane helix</keyword>
<keyword id="KW-0833">Ubl conjugation pathway</keyword>
<keyword id="KW-0862">Zinc</keyword>
<keyword id="KW-0863">Zinc-finger</keyword>
<reference key="1">
    <citation type="journal article" date="2005" name="Genome Biol.">
        <title>Full-length cDNAs from chicken bursal lymphocytes to facilitate gene function analysis.</title>
        <authorList>
            <person name="Caldwell R.B."/>
            <person name="Kierzek A.M."/>
            <person name="Arakawa H."/>
            <person name="Bezzubov Y."/>
            <person name="Zaim J."/>
            <person name="Fiedler P."/>
            <person name="Kutter S."/>
            <person name="Blagodatski A."/>
            <person name="Kostovska D."/>
            <person name="Koter M."/>
            <person name="Plachy J."/>
            <person name="Carninci P."/>
            <person name="Hayashizaki Y."/>
            <person name="Buerstedde J.-M."/>
        </authorList>
    </citation>
    <scope>NUCLEOTIDE SEQUENCE [LARGE SCALE MRNA]</scope>
    <source>
        <strain>CB</strain>
        <tissue>Bursa of Fabricius</tissue>
    </source>
</reference>
<accession>Q5ZIR9</accession>
<sequence>MASKGPTTSASTKSSSTGGTSGSSSSNGAGDNTNQDNTFECNICLDTAKDAVISLCGHLFCWPCLHQWLETRPNRQVCPVCKAGISRDKVIPLYGRGSTGQQDPREKTPPRPQGQRPEPENRGGFQGFGFGDGGFQMSFGIGAFPFGIFATAFNINDGRPPPAVPGTPQYVDEQFLSRLFLFVALVIMFWLLIA</sequence>
<evidence type="ECO:0000250" key="1">
    <source>
        <dbReference type="UniProtKB" id="Q96GF1"/>
    </source>
</evidence>
<evidence type="ECO:0000255" key="2"/>
<evidence type="ECO:0000255" key="3">
    <source>
        <dbReference type="PROSITE-ProRule" id="PRU00175"/>
    </source>
</evidence>
<evidence type="ECO:0000256" key="4">
    <source>
        <dbReference type="SAM" id="MobiDB-lite"/>
    </source>
</evidence>
<proteinExistence type="evidence at transcript level"/>
<dbReference type="EC" id="2.3.2.27" evidence="1"/>
<dbReference type="EMBL" id="AJ720715">
    <property type="protein sequence ID" value="CAG32374.1"/>
    <property type="molecule type" value="mRNA"/>
</dbReference>
<dbReference type="RefSeq" id="NP_001007841.1">
    <property type="nucleotide sequence ID" value="NM_001007840.1"/>
</dbReference>
<dbReference type="RefSeq" id="XP_015130814.1">
    <property type="nucleotide sequence ID" value="XM_015275328.1"/>
</dbReference>
<dbReference type="RefSeq" id="XP_015130815.1">
    <property type="nucleotide sequence ID" value="XM_015275329.1"/>
</dbReference>
<dbReference type="SMR" id="Q5ZIR9"/>
<dbReference type="FunCoup" id="Q5ZIR9">
    <property type="interactions" value="695"/>
</dbReference>
<dbReference type="STRING" id="9031.ENSGALP00000068585"/>
<dbReference type="GlyGen" id="Q5ZIR9">
    <property type="glycosylation" value="1 site"/>
</dbReference>
<dbReference type="PaxDb" id="9031-ENSGALP00000011262"/>
<dbReference type="GeneID" id="416965"/>
<dbReference type="KEGG" id="gga:416965"/>
<dbReference type="CTD" id="6048"/>
<dbReference type="VEuPathDB" id="HostDB:geneid_416965"/>
<dbReference type="eggNOG" id="KOG0823">
    <property type="taxonomic scope" value="Eukaryota"/>
</dbReference>
<dbReference type="HOGENOM" id="CLU_055198_2_2_1"/>
<dbReference type="InParanoid" id="Q5ZIR9"/>
<dbReference type="OMA" id="RPNRQTC"/>
<dbReference type="PhylomeDB" id="Q5ZIR9"/>
<dbReference type="TreeFam" id="TF317334"/>
<dbReference type="Reactome" id="R-GGA-382556">
    <property type="pathway name" value="ABC-family proteins mediated transport"/>
</dbReference>
<dbReference type="UniPathway" id="UPA00143"/>
<dbReference type="PRO" id="PR:Q5ZIR9"/>
<dbReference type="Proteomes" id="UP000000539">
    <property type="component" value="Chromosome 15"/>
</dbReference>
<dbReference type="Bgee" id="ENSGALG00000006960">
    <property type="expression patterns" value="Expressed in testis and 13 other cell types or tissues"/>
</dbReference>
<dbReference type="GO" id="GO:0005789">
    <property type="term" value="C:endoplasmic reticulum membrane"/>
    <property type="evidence" value="ECO:0007669"/>
    <property type="project" value="UniProtKB-SubCell"/>
</dbReference>
<dbReference type="GO" id="GO:0005741">
    <property type="term" value="C:mitochondrial outer membrane"/>
    <property type="evidence" value="ECO:0007669"/>
    <property type="project" value="UniProtKB-SubCell"/>
</dbReference>
<dbReference type="GO" id="GO:0061630">
    <property type="term" value="F:ubiquitin protein ligase activity"/>
    <property type="evidence" value="ECO:0000250"/>
    <property type="project" value="UniProtKB"/>
</dbReference>
<dbReference type="GO" id="GO:0044390">
    <property type="term" value="F:ubiquitin-like protein conjugating enzyme binding"/>
    <property type="evidence" value="ECO:0000318"/>
    <property type="project" value="GO_Central"/>
</dbReference>
<dbReference type="GO" id="GO:0008270">
    <property type="term" value="F:zinc ion binding"/>
    <property type="evidence" value="ECO:0007669"/>
    <property type="project" value="UniProtKB-KW"/>
</dbReference>
<dbReference type="GO" id="GO:0006914">
    <property type="term" value="P:autophagy"/>
    <property type="evidence" value="ECO:0007669"/>
    <property type="project" value="UniProtKB-KW"/>
</dbReference>
<dbReference type="GO" id="GO:0051607">
    <property type="term" value="P:defense response to virus"/>
    <property type="evidence" value="ECO:0000250"/>
    <property type="project" value="UniProtKB"/>
</dbReference>
<dbReference type="GO" id="GO:0036503">
    <property type="term" value="P:ERAD pathway"/>
    <property type="evidence" value="ECO:0000318"/>
    <property type="project" value="GO_Central"/>
</dbReference>
<dbReference type="GO" id="GO:0045087">
    <property type="term" value="P:innate immune response"/>
    <property type="evidence" value="ECO:0007669"/>
    <property type="project" value="UniProtKB-KW"/>
</dbReference>
<dbReference type="GO" id="GO:0060340">
    <property type="term" value="P:positive regulation of type I interferon-mediated signaling pathway"/>
    <property type="evidence" value="ECO:0000250"/>
    <property type="project" value="UniProtKB"/>
</dbReference>
<dbReference type="GO" id="GO:0044314">
    <property type="term" value="P:protein K27-linked ubiquitination"/>
    <property type="evidence" value="ECO:0000250"/>
    <property type="project" value="UniProtKB"/>
</dbReference>
<dbReference type="GO" id="GO:0006511">
    <property type="term" value="P:ubiquitin-dependent protein catabolic process"/>
    <property type="evidence" value="ECO:0000318"/>
    <property type="project" value="GO_Central"/>
</dbReference>
<dbReference type="CDD" id="cd16744">
    <property type="entry name" value="RING-HC_RNF185"/>
    <property type="match status" value="1"/>
</dbReference>
<dbReference type="FunFam" id="3.30.40.10:FF:000062">
    <property type="entry name" value="E3 ubiquitin-protein ligase RNF185"/>
    <property type="match status" value="1"/>
</dbReference>
<dbReference type="Gene3D" id="3.30.40.10">
    <property type="entry name" value="Zinc/RING finger domain, C3HC4 (zinc finger)"/>
    <property type="match status" value="1"/>
</dbReference>
<dbReference type="InterPro" id="IPR045103">
    <property type="entry name" value="RNF5/RNF185-like"/>
</dbReference>
<dbReference type="InterPro" id="IPR018957">
    <property type="entry name" value="Znf_C3HC4_RING-type"/>
</dbReference>
<dbReference type="InterPro" id="IPR001841">
    <property type="entry name" value="Znf_RING"/>
</dbReference>
<dbReference type="InterPro" id="IPR013083">
    <property type="entry name" value="Znf_RING/FYVE/PHD"/>
</dbReference>
<dbReference type="InterPro" id="IPR017907">
    <property type="entry name" value="Znf_RING_CS"/>
</dbReference>
<dbReference type="PANTHER" id="PTHR12313">
    <property type="entry name" value="E3 UBIQUITIN-PROTEIN LIGASE RNF5-RELATED"/>
    <property type="match status" value="1"/>
</dbReference>
<dbReference type="Pfam" id="PF00097">
    <property type="entry name" value="zf-C3HC4"/>
    <property type="match status" value="1"/>
</dbReference>
<dbReference type="SMART" id="SM00184">
    <property type="entry name" value="RING"/>
    <property type="match status" value="1"/>
</dbReference>
<dbReference type="SUPFAM" id="SSF57850">
    <property type="entry name" value="RING/U-box"/>
    <property type="match status" value="1"/>
</dbReference>
<dbReference type="PROSITE" id="PS00518">
    <property type="entry name" value="ZF_RING_1"/>
    <property type="match status" value="1"/>
</dbReference>
<dbReference type="PROSITE" id="PS50089">
    <property type="entry name" value="ZF_RING_2"/>
    <property type="match status" value="1"/>
</dbReference>
<name>RN185_CHICK</name>